<accession>Q54N49</accession>
<protein>
    <recommendedName>
        <fullName>Inositol-3-phosphate synthase</fullName>
        <ecNumber evidence="2">5.5.1.4</ecNumber>
    </recommendedName>
    <alternativeName>
        <fullName>Myo-inositol 1-phosphate synthase</fullName>
        <shortName>IPS</shortName>
        <shortName>MI-1-P synthase</shortName>
        <shortName>MIP synthase</shortName>
    </alternativeName>
</protein>
<proteinExistence type="inferred from homology"/>
<evidence type="ECO:0000250" key="1">
    <source>
        <dbReference type="UniProtKB" id="P11986"/>
    </source>
</evidence>
<evidence type="ECO:0000250" key="2">
    <source>
        <dbReference type="UniProtKB" id="Q9NPH2"/>
    </source>
</evidence>
<evidence type="ECO:0000305" key="3"/>
<feature type="chain" id="PRO_0000331194" description="Inositol-3-phosphate synthase">
    <location>
        <begin position="1"/>
        <end position="511"/>
    </location>
</feature>
<feature type="binding site" evidence="1">
    <location>
        <position position="70"/>
    </location>
    <ligand>
        <name>NAD(+)</name>
        <dbReference type="ChEBI" id="CHEBI:57540"/>
    </ligand>
</feature>
<feature type="binding site" evidence="1">
    <location>
        <position position="71"/>
    </location>
    <ligand>
        <name>NAD(+)</name>
        <dbReference type="ChEBI" id="CHEBI:57540"/>
    </ligand>
</feature>
<feature type="binding site" evidence="1">
    <location>
        <position position="72"/>
    </location>
    <ligand>
        <name>NAD(+)</name>
        <dbReference type="ChEBI" id="CHEBI:57540"/>
    </ligand>
</feature>
<feature type="binding site" evidence="1">
    <location>
        <position position="143"/>
    </location>
    <ligand>
        <name>NAD(+)</name>
        <dbReference type="ChEBI" id="CHEBI:57540"/>
    </ligand>
</feature>
<feature type="binding site" evidence="1">
    <location>
        <position position="179"/>
    </location>
    <ligand>
        <name>NAD(+)</name>
        <dbReference type="ChEBI" id="CHEBI:57540"/>
    </ligand>
</feature>
<feature type="binding site" evidence="1">
    <location>
        <position position="180"/>
    </location>
    <ligand>
        <name>NAD(+)</name>
        <dbReference type="ChEBI" id="CHEBI:57540"/>
    </ligand>
</feature>
<feature type="binding site" evidence="1">
    <location>
        <position position="190"/>
    </location>
    <ligand>
        <name>NAD(+)</name>
        <dbReference type="ChEBI" id="CHEBI:57540"/>
    </ligand>
</feature>
<feature type="binding site" evidence="1">
    <location>
        <position position="193"/>
    </location>
    <ligand>
        <name>NAD(+)</name>
        <dbReference type="ChEBI" id="CHEBI:57540"/>
    </ligand>
</feature>
<feature type="binding site" evidence="1">
    <location>
        <position position="230"/>
    </location>
    <ligand>
        <name>NAD(+)</name>
        <dbReference type="ChEBI" id="CHEBI:57540"/>
    </ligand>
</feature>
<feature type="binding site" evidence="1">
    <location>
        <position position="231"/>
    </location>
    <ligand>
        <name>NAD(+)</name>
        <dbReference type="ChEBI" id="CHEBI:57540"/>
    </ligand>
</feature>
<feature type="binding site" evidence="1">
    <location>
        <position position="232"/>
    </location>
    <ligand>
        <name>NAD(+)</name>
        <dbReference type="ChEBI" id="CHEBI:57540"/>
    </ligand>
</feature>
<feature type="binding site" evidence="1">
    <location>
        <position position="233"/>
    </location>
    <ligand>
        <name>NAD(+)</name>
        <dbReference type="ChEBI" id="CHEBI:57540"/>
    </ligand>
</feature>
<feature type="binding site" evidence="1">
    <location>
        <position position="281"/>
    </location>
    <ligand>
        <name>NAD(+)</name>
        <dbReference type="ChEBI" id="CHEBI:57540"/>
    </ligand>
</feature>
<feature type="binding site" evidence="1">
    <location>
        <position position="282"/>
    </location>
    <ligand>
        <name>NAD(+)</name>
        <dbReference type="ChEBI" id="CHEBI:57540"/>
    </ligand>
</feature>
<feature type="binding site" evidence="1">
    <location>
        <position position="306"/>
    </location>
    <ligand>
        <name>NAD(+)</name>
        <dbReference type="ChEBI" id="CHEBI:57540"/>
    </ligand>
</feature>
<feature type="binding site" evidence="1">
    <location>
        <position position="309"/>
    </location>
    <ligand>
        <name>NAD(+)</name>
        <dbReference type="ChEBI" id="CHEBI:57540"/>
    </ligand>
</feature>
<feature type="binding site" evidence="1">
    <location>
        <position position="340"/>
    </location>
    <ligand>
        <name>NAD(+)</name>
        <dbReference type="ChEBI" id="CHEBI:57540"/>
    </ligand>
</feature>
<feature type="binding site" evidence="1">
    <location>
        <position position="341"/>
    </location>
    <ligand>
        <name>NAD(+)</name>
        <dbReference type="ChEBI" id="CHEBI:57540"/>
    </ligand>
</feature>
<feature type="binding site" evidence="1">
    <location>
        <position position="342"/>
    </location>
    <ligand>
        <name>NAD(+)</name>
        <dbReference type="ChEBI" id="CHEBI:57540"/>
    </ligand>
</feature>
<feature type="binding site" evidence="1">
    <location>
        <position position="355"/>
    </location>
    <ligand>
        <name>NAD(+)</name>
        <dbReference type="ChEBI" id="CHEBI:57540"/>
    </ligand>
</feature>
<feature type="binding site" evidence="1">
    <location>
        <position position="393"/>
    </location>
    <ligand>
        <name>NAD(+)</name>
        <dbReference type="ChEBI" id="CHEBI:57540"/>
    </ligand>
</feature>
<feature type="binding site" evidence="1">
    <location>
        <position position="394"/>
    </location>
    <ligand>
        <name>NAD(+)</name>
        <dbReference type="ChEBI" id="CHEBI:57540"/>
    </ligand>
</feature>
<feature type="binding site" evidence="1">
    <location>
        <position position="422"/>
    </location>
    <ligand>
        <name>NAD(+)</name>
        <dbReference type="ChEBI" id="CHEBI:57540"/>
    </ligand>
</feature>
<feature type="binding site" evidence="1">
    <location>
        <position position="423"/>
    </location>
    <ligand>
        <name>NAD(+)</name>
        <dbReference type="ChEBI" id="CHEBI:57540"/>
    </ligand>
</feature>
<comment type="function">
    <text evidence="2">Key enzyme in myo-inositol biosynthesis pathway that catalyzes the conversion of glucose 6-phosphate to 1-myo-inositol 1-phosphate in a NAD-dependent manner. Rate-limiting enzyme in the synthesis of all inositol-containing compounds (By similarity).</text>
</comment>
<comment type="catalytic activity">
    <reaction evidence="2">
        <text>D-glucose 6-phosphate = 1D-myo-inositol 3-phosphate</text>
        <dbReference type="Rhea" id="RHEA:10716"/>
        <dbReference type="ChEBI" id="CHEBI:58401"/>
        <dbReference type="ChEBI" id="CHEBI:61548"/>
        <dbReference type="EC" id="5.5.1.4"/>
    </reaction>
</comment>
<comment type="cofactor">
    <cofactor evidence="2">
        <name>NAD(+)</name>
        <dbReference type="ChEBI" id="CHEBI:57540"/>
    </cofactor>
</comment>
<comment type="pathway">
    <text>Polyol metabolism; myo-inositol biosynthesis; myo-inositol from D-glucose 6-phosphate: step 1/2.</text>
</comment>
<comment type="subcellular location">
    <subcellularLocation>
        <location evidence="1">Cytoplasm</location>
    </subcellularLocation>
</comment>
<comment type="similarity">
    <text evidence="3">Belongs to the myo-inositol 1-phosphate synthase family.</text>
</comment>
<keyword id="KW-0963">Cytoplasm</keyword>
<keyword id="KW-0398">Inositol biosynthesis</keyword>
<keyword id="KW-0413">Isomerase</keyword>
<keyword id="KW-0444">Lipid biosynthesis</keyword>
<keyword id="KW-0443">Lipid metabolism</keyword>
<keyword id="KW-0520">NAD</keyword>
<keyword id="KW-0594">Phospholipid biosynthesis</keyword>
<keyword id="KW-1208">Phospholipid metabolism</keyword>
<keyword id="KW-1185">Reference proteome</keyword>
<reference key="1">
    <citation type="journal article" date="2005" name="Nature">
        <title>The genome of the social amoeba Dictyostelium discoideum.</title>
        <authorList>
            <person name="Eichinger L."/>
            <person name="Pachebat J.A."/>
            <person name="Gloeckner G."/>
            <person name="Rajandream M.A."/>
            <person name="Sucgang R."/>
            <person name="Berriman M."/>
            <person name="Song J."/>
            <person name="Olsen R."/>
            <person name="Szafranski K."/>
            <person name="Xu Q."/>
            <person name="Tunggal B."/>
            <person name="Kummerfeld S."/>
            <person name="Madera M."/>
            <person name="Konfortov B.A."/>
            <person name="Rivero F."/>
            <person name="Bankier A.T."/>
            <person name="Lehmann R."/>
            <person name="Hamlin N."/>
            <person name="Davies R."/>
            <person name="Gaudet P."/>
            <person name="Fey P."/>
            <person name="Pilcher K."/>
            <person name="Chen G."/>
            <person name="Saunders D."/>
            <person name="Sodergren E.J."/>
            <person name="Davis P."/>
            <person name="Kerhornou A."/>
            <person name="Nie X."/>
            <person name="Hall N."/>
            <person name="Anjard C."/>
            <person name="Hemphill L."/>
            <person name="Bason N."/>
            <person name="Farbrother P."/>
            <person name="Desany B."/>
            <person name="Just E."/>
            <person name="Morio T."/>
            <person name="Rost R."/>
            <person name="Churcher C.M."/>
            <person name="Cooper J."/>
            <person name="Haydock S."/>
            <person name="van Driessche N."/>
            <person name="Cronin A."/>
            <person name="Goodhead I."/>
            <person name="Muzny D.M."/>
            <person name="Mourier T."/>
            <person name="Pain A."/>
            <person name="Lu M."/>
            <person name="Harper D."/>
            <person name="Lindsay R."/>
            <person name="Hauser H."/>
            <person name="James K.D."/>
            <person name="Quiles M."/>
            <person name="Madan Babu M."/>
            <person name="Saito T."/>
            <person name="Buchrieser C."/>
            <person name="Wardroper A."/>
            <person name="Felder M."/>
            <person name="Thangavelu M."/>
            <person name="Johnson D."/>
            <person name="Knights A."/>
            <person name="Loulseged H."/>
            <person name="Mungall K.L."/>
            <person name="Oliver K."/>
            <person name="Price C."/>
            <person name="Quail M.A."/>
            <person name="Urushihara H."/>
            <person name="Hernandez J."/>
            <person name="Rabbinowitsch E."/>
            <person name="Steffen D."/>
            <person name="Sanders M."/>
            <person name="Ma J."/>
            <person name="Kohara Y."/>
            <person name="Sharp S."/>
            <person name="Simmonds M.N."/>
            <person name="Spiegler S."/>
            <person name="Tivey A."/>
            <person name="Sugano S."/>
            <person name="White B."/>
            <person name="Walker D."/>
            <person name="Woodward J.R."/>
            <person name="Winckler T."/>
            <person name="Tanaka Y."/>
            <person name="Shaulsky G."/>
            <person name="Schleicher M."/>
            <person name="Weinstock G.M."/>
            <person name="Rosenthal A."/>
            <person name="Cox E.C."/>
            <person name="Chisholm R.L."/>
            <person name="Gibbs R.A."/>
            <person name="Loomis W.F."/>
            <person name="Platzer M."/>
            <person name="Kay R.R."/>
            <person name="Williams J.G."/>
            <person name="Dear P.H."/>
            <person name="Noegel A.A."/>
            <person name="Barrell B.G."/>
            <person name="Kuspa A."/>
        </authorList>
    </citation>
    <scope>NUCLEOTIDE SEQUENCE [LARGE SCALE GENOMIC DNA]</scope>
    <source>
        <strain>AX4</strain>
    </source>
</reference>
<sequence length="511" mass="56847">MSAQMFESFKVNSPNVKYTDEHIISDYTYQTTKVQNVNGELIVEPVDQKYIFKTERKVPRMGVMIVGLCGNNGTTVVGGVIANREGLCWNTKQGLQTPNYFGSVVMSSTIRMGMDENGCDAYIPLKNLIPMVHPNDIVFGGWDINNANLADAMQRAQVFDYDLQVQLIPHMKNITPLPSIYFPDFIAANQKDRANNVLTGTKKEQMEQIRKDIRDFKESNKLDTVVVMWSANTERFSSLVPGVNDTIENLMAAIDRSEEEISPSTLFAVASILENTTYINGSPQNTFVPAVVDLAIQHNVSIGGDDFKTGQTKIKSVLTDYLVSAGIKPVSIVSYNHLGNNDGKNLSAPQQFRSKEITKSNVVDDMIASNNILYKQGEHPDHVIVIKYVPYVGDSKRAMDEYTSQIFMGGHNTIVLHNTCEDSLLAAPIILDLVILAEVTSRITMKKQDDDQFATFHPVLSLLSYLLKAPIVPKHATVVNALFKQRACIENIFKACVGIAPDNNMLLEQRL</sequence>
<gene>
    <name type="primary">ino1</name>
    <name type="ORF">DDB_G0285505</name>
</gene>
<dbReference type="EC" id="5.5.1.4" evidence="2"/>
<dbReference type="EMBL" id="AAFI02000079">
    <property type="protein sequence ID" value="EAL64590.1"/>
    <property type="molecule type" value="Genomic_DNA"/>
</dbReference>
<dbReference type="RefSeq" id="XP_638094.1">
    <property type="nucleotide sequence ID" value="XM_633002.1"/>
</dbReference>
<dbReference type="SMR" id="Q54N49"/>
<dbReference type="FunCoup" id="Q54N49">
    <property type="interactions" value="477"/>
</dbReference>
<dbReference type="STRING" id="44689.Q54N49"/>
<dbReference type="PaxDb" id="44689-DDB0231710"/>
<dbReference type="EnsemblProtists" id="EAL64590">
    <property type="protein sequence ID" value="EAL64590"/>
    <property type="gene ID" value="DDB_G0285505"/>
</dbReference>
<dbReference type="GeneID" id="8625142"/>
<dbReference type="KEGG" id="ddi:DDB_G0285505"/>
<dbReference type="dictyBase" id="DDB_G0285505">
    <property type="gene designation" value="ino1"/>
</dbReference>
<dbReference type="VEuPathDB" id="AmoebaDB:DDB_G0285505"/>
<dbReference type="eggNOG" id="KOG0693">
    <property type="taxonomic scope" value="Eukaryota"/>
</dbReference>
<dbReference type="HOGENOM" id="CLU_021486_2_0_1"/>
<dbReference type="InParanoid" id="Q54N49"/>
<dbReference type="OMA" id="VYVPMKE"/>
<dbReference type="PhylomeDB" id="Q54N49"/>
<dbReference type="BioCyc" id="MetaCyc:MONOMER-15198"/>
<dbReference type="BRENDA" id="5.5.1.4">
    <property type="organism ID" value="1939"/>
</dbReference>
<dbReference type="Reactome" id="R-DDI-1855183">
    <property type="pathway name" value="Synthesis of IP2, IP, and Ins in the cytosol"/>
</dbReference>
<dbReference type="UniPathway" id="UPA00823">
    <property type="reaction ID" value="UER00787"/>
</dbReference>
<dbReference type="PRO" id="PR:Q54N49"/>
<dbReference type="Proteomes" id="UP000002195">
    <property type="component" value="Chromosome 4"/>
</dbReference>
<dbReference type="GO" id="GO:0005737">
    <property type="term" value="C:cytoplasm"/>
    <property type="evidence" value="ECO:0000318"/>
    <property type="project" value="GO_Central"/>
</dbReference>
<dbReference type="GO" id="GO:0005829">
    <property type="term" value="C:cytosol"/>
    <property type="evidence" value="ECO:0000314"/>
    <property type="project" value="dictyBase"/>
</dbReference>
<dbReference type="GO" id="GO:0004512">
    <property type="term" value="F:inositol-3-phosphate synthase activity"/>
    <property type="evidence" value="ECO:0000315"/>
    <property type="project" value="dictyBase"/>
</dbReference>
<dbReference type="GO" id="GO:0006914">
    <property type="term" value="P:autophagy"/>
    <property type="evidence" value="ECO:0000315"/>
    <property type="project" value="dictyBase"/>
</dbReference>
<dbReference type="GO" id="GO:0031589">
    <property type="term" value="P:cell-substrate adhesion"/>
    <property type="evidence" value="ECO:0000315"/>
    <property type="project" value="dictyBase"/>
</dbReference>
<dbReference type="GO" id="GO:0006021">
    <property type="term" value="P:inositol biosynthetic process"/>
    <property type="evidence" value="ECO:0000315"/>
    <property type="project" value="dictyBase"/>
</dbReference>
<dbReference type="GO" id="GO:0000281">
    <property type="term" value="P:mitotic cytokinesis"/>
    <property type="evidence" value="ECO:0000315"/>
    <property type="project" value="dictyBase"/>
</dbReference>
<dbReference type="GO" id="GO:0008654">
    <property type="term" value="P:phospholipid biosynthetic process"/>
    <property type="evidence" value="ECO:0007669"/>
    <property type="project" value="UniProtKB-KW"/>
</dbReference>
<dbReference type="GO" id="GO:1903725">
    <property type="term" value="P:regulation of phospholipid metabolic process"/>
    <property type="evidence" value="ECO:0000315"/>
    <property type="project" value="dictyBase"/>
</dbReference>
<dbReference type="FunFam" id="3.40.50.720:FF:000107">
    <property type="entry name" value="inositol-3-phosphate synthase"/>
    <property type="match status" value="1"/>
</dbReference>
<dbReference type="FunFam" id="3.40.50.720:FF:000069">
    <property type="entry name" value="Inositol-3-phosphate synthase 1"/>
    <property type="match status" value="1"/>
</dbReference>
<dbReference type="FunFam" id="3.30.360.10:FF:000055">
    <property type="entry name" value="Putative myo-inositol-1-phosphate synthase"/>
    <property type="match status" value="1"/>
</dbReference>
<dbReference type="Gene3D" id="3.40.50.720">
    <property type="entry name" value="NAD(P)-binding Rossmann-like Domain"/>
    <property type="match status" value="2"/>
</dbReference>
<dbReference type="InterPro" id="IPR002587">
    <property type="entry name" value="Myo-inos-1-P_Synthase"/>
</dbReference>
<dbReference type="InterPro" id="IPR013021">
    <property type="entry name" value="Myo-inos-1-P_Synthase_GAPDH"/>
</dbReference>
<dbReference type="InterPro" id="IPR036291">
    <property type="entry name" value="NAD(P)-bd_dom_sf"/>
</dbReference>
<dbReference type="PANTHER" id="PTHR11510">
    <property type="entry name" value="MYO-INOSITOL-1 PHOSPHATE SYNTHASE"/>
    <property type="match status" value="1"/>
</dbReference>
<dbReference type="Pfam" id="PF01658">
    <property type="entry name" value="Inos-1-P_synth"/>
    <property type="match status" value="1"/>
</dbReference>
<dbReference type="Pfam" id="PF07994">
    <property type="entry name" value="NAD_binding_5"/>
    <property type="match status" value="1"/>
</dbReference>
<dbReference type="PIRSF" id="PIRSF015578">
    <property type="entry name" value="Myoinos-ppht_syn"/>
    <property type="match status" value="1"/>
</dbReference>
<dbReference type="SUPFAM" id="SSF55347">
    <property type="entry name" value="Glyceraldehyde-3-phosphate dehydrogenase-like, C-terminal domain"/>
    <property type="match status" value="1"/>
</dbReference>
<dbReference type="SUPFAM" id="SSF51735">
    <property type="entry name" value="NAD(P)-binding Rossmann-fold domains"/>
    <property type="match status" value="1"/>
</dbReference>
<name>INO1_DICDI</name>
<organism>
    <name type="scientific">Dictyostelium discoideum</name>
    <name type="common">Social amoeba</name>
    <dbReference type="NCBI Taxonomy" id="44689"/>
    <lineage>
        <taxon>Eukaryota</taxon>
        <taxon>Amoebozoa</taxon>
        <taxon>Evosea</taxon>
        <taxon>Eumycetozoa</taxon>
        <taxon>Dictyostelia</taxon>
        <taxon>Dictyosteliales</taxon>
        <taxon>Dictyosteliaceae</taxon>
        <taxon>Dictyostelium</taxon>
    </lineage>
</organism>